<reference key="1">
    <citation type="submission" date="2003-01" db="EMBL/GenBank/DDBJ databases">
        <authorList>
            <consortium name="NIH - Xenopus Gene Collection (XGC) project"/>
        </authorList>
    </citation>
    <scope>NUCLEOTIDE SEQUENCE [LARGE SCALE MRNA]</scope>
    <source>
        <tissue>Embryo</tissue>
    </source>
</reference>
<name>HNDLA_XENLA</name>
<comment type="function">
    <text evidence="1">Acts as a transcriptional regulator. Binds DNA and RNA (By similarity).</text>
</comment>
<comment type="subcellular location">
    <subcellularLocation>
        <location evidence="2">Nucleus</location>
    </subcellularLocation>
    <subcellularLocation>
        <location evidence="2">Cytoplasm</location>
    </subcellularLocation>
</comment>
<sequence length="293" mass="32614">MAGFGAAPDFNEGSKINASKNQQDEGKMFIGGLSWDTSKKDLTEYLSRFGEVLDCTIKTDPVTGRSRGFGFVLFKDAVSVDKVLETNEHKLDGKLIDPKRAKALKGKEPPKKVFVGGLSPETTEEQIKQYFGGFGEIENIELPIDTKTNERRGFCFVTYTGEEPVKKLLESRFHQIGTGKCEIKAAQPKEVYRQQQQKQQRGGRGAVTGRGGTRGRGRGQGWNQGYNNYYDQNYGGYGNNGSYGDQDYNSYSGYDYSGYSYGYNPGYTEYSGQQSTYGKARGGGNHQNNYQPY</sequence>
<evidence type="ECO:0000250" key="1"/>
<evidence type="ECO:0000250" key="2">
    <source>
        <dbReference type="UniProtKB" id="O14979"/>
    </source>
</evidence>
<evidence type="ECO:0000255" key="3">
    <source>
        <dbReference type="PROSITE-ProRule" id="PRU00176"/>
    </source>
</evidence>
<evidence type="ECO:0000256" key="4">
    <source>
        <dbReference type="SAM" id="MobiDB-lite"/>
    </source>
</evidence>
<dbReference type="EMBL" id="BC045124">
    <property type="protein sequence ID" value="AAH45124.1"/>
    <property type="molecule type" value="mRNA"/>
</dbReference>
<dbReference type="RefSeq" id="NP_001079609.1">
    <property type="nucleotide sequence ID" value="NM_001086140.1"/>
</dbReference>
<dbReference type="RefSeq" id="XP_018114952.1">
    <property type="nucleotide sequence ID" value="XM_018259463.1"/>
</dbReference>
<dbReference type="SMR" id="Q7ZX83"/>
<dbReference type="BioGRID" id="97539">
    <property type="interactions" value="1"/>
</dbReference>
<dbReference type="DNASU" id="379296"/>
<dbReference type="GeneID" id="379296"/>
<dbReference type="KEGG" id="xla:379296"/>
<dbReference type="AGR" id="Xenbase:XB-GENE-866408"/>
<dbReference type="CTD" id="379296"/>
<dbReference type="Xenbase" id="XB-GENE-866408">
    <property type="gene designation" value="hnrnpdl.L"/>
</dbReference>
<dbReference type="OMA" id="QVDTEMN"/>
<dbReference type="OrthoDB" id="1875751at2759"/>
<dbReference type="Proteomes" id="UP000186698">
    <property type="component" value="Chromosome 1L"/>
</dbReference>
<dbReference type="Bgee" id="379296">
    <property type="expression patterns" value="Expressed in gastrula and 19 other cell types or tissues"/>
</dbReference>
<dbReference type="GO" id="GO:0000785">
    <property type="term" value="C:chromatin"/>
    <property type="evidence" value="ECO:0000318"/>
    <property type="project" value="GO_Central"/>
</dbReference>
<dbReference type="GO" id="GO:0005737">
    <property type="term" value="C:cytoplasm"/>
    <property type="evidence" value="ECO:0007669"/>
    <property type="project" value="UniProtKB-SubCell"/>
</dbReference>
<dbReference type="GO" id="GO:0005654">
    <property type="term" value="C:nucleoplasm"/>
    <property type="evidence" value="ECO:0000318"/>
    <property type="project" value="GO_Central"/>
</dbReference>
<dbReference type="GO" id="GO:0003677">
    <property type="term" value="F:DNA binding"/>
    <property type="evidence" value="ECO:0007669"/>
    <property type="project" value="UniProtKB-KW"/>
</dbReference>
<dbReference type="GO" id="GO:0008143">
    <property type="term" value="F:poly(A) binding"/>
    <property type="evidence" value="ECO:0007669"/>
    <property type="project" value="TreeGrafter"/>
</dbReference>
<dbReference type="GO" id="GO:0034046">
    <property type="term" value="F:poly(G) binding"/>
    <property type="evidence" value="ECO:0007669"/>
    <property type="project" value="TreeGrafter"/>
</dbReference>
<dbReference type="GO" id="GO:0003723">
    <property type="term" value="F:RNA binding"/>
    <property type="evidence" value="ECO:0000318"/>
    <property type="project" value="GO_Central"/>
</dbReference>
<dbReference type="GO" id="GO:0010468">
    <property type="term" value="P:regulation of gene expression"/>
    <property type="evidence" value="ECO:0000318"/>
    <property type="project" value="GO_Central"/>
</dbReference>
<dbReference type="CDD" id="cd12758">
    <property type="entry name" value="RRM1_hnRPDL"/>
    <property type="match status" value="1"/>
</dbReference>
<dbReference type="FunFam" id="3.30.70.330:FF:000220">
    <property type="entry name" value="Heterogeneous nuclear ribonucleoprotein D-like protein"/>
    <property type="match status" value="1"/>
</dbReference>
<dbReference type="FunFam" id="3.30.70.330:FF:000030">
    <property type="entry name" value="Heterogeneous nuclear ribonucleoprotein d0 isoform"/>
    <property type="match status" value="1"/>
</dbReference>
<dbReference type="Gene3D" id="3.30.70.330">
    <property type="match status" value="2"/>
</dbReference>
<dbReference type="InterPro" id="IPR034847">
    <property type="entry name" value="hnRPDL_RRM1"/>
</dbReference>
<dbReference type="InterPro" id="IPR012677">
    <property type="entry name" value="Nucleotide-bd_a/b_plait_sf"/>
</dbReference>
<dbReference type="InterPro" id="IPR035979">
    <property type="entry name" value="RBD_domain_sf"/>
</dbReference>
<dbReference type="InterPro" id="IPR000504">
    <property type="entry name" value="RRM_dom"/>
</dbReference>
<dbReference type="PANTHER" id="PTHR48033:SF2">
    <property type="entry name" value="HETEROGENEOUS NUCLEAR RIBONUCLEOPROTEIN D-LIKE"/>
    <property type="match status" value="1"/>
</dbReference>
<dbReference type="PANTHER" id="PTHR48033">
    <property type="entry name" value="RNA-BINDING (RRM/RBD/RNP MOTIFS) FAMILY PROTEIN"/>
    <property type="match status" value="1"/>
</dbReference>
<dbReference type="Pfam" id="PF00076">
    <property type="entry name" value="RRM_1"/>
    <property type="match status" value="2"/>
</dbReference>
<dbReference type="SMART" id="SM00360">
    <property type="entry name" value="RRM"/>
    <property type="match status" value="2"/>
</dbReference>
<dbReference type="SUPFAM" id="SSF54928">
    <property type="entry name" value="RNA-binding domain, RBD"/>
    <property type="match status" value="2"/>
</dbReference>
<dbReference type="PROSITE" id="PS50102">
    <property type="entry name" value="RRM"/>
    <property type="match status" value="2"/>
</dbReference>
<organism>
    <name type="scientific">Xenopus laevis</name>
    <name type="common">African clawed frog</name>
    <dbReference type="NCBI Taxonomy" id="8355"/>
    <lineage>
        <taxon>Eukaryota</taxon>
        <taxon>Metazoa</taxon>
        <taxon>Chordata</taxon>
        <taxon>Craniata</taxon>
        <taxon>Vertebrata</taxon>
        <taxon>Euteleostomi</taxon>
        <taxon>Amphibia</taxon>
        <taxon>Batrachia</taxon>
        <taxon>Anura</taxon>
        <taxon>Pipoidea</taxon>
        <taxon>Pipidae</taxon>
        <taxon>Xenopodinae</taxon>
        <taxon>Xenopus</taxon>
        <taxon>Xenopus</taxon>
    </lineage>
</organism>
<accession>Q7ZX83</accession>
<keyword id="KW-0963">Cytoplasm</keyword>
<keyword id="KW-0238">DNA-binding</keyword>
<keyword id="KW-0488">Methylation</keyword>
<keyword id="KW-0539">Nucleus</keyword>
<keyword id="KW-1185">Reference proteome</keyword>
<keyword id="KW-0677">Repeat</keyword>
<keyword id="KW-0694">RNA-binding</keyword>
<keyword id="KW-0804">Transcription</keyword>
<keyword id="KW-0805">Transcription regulation</keyword>
<feature type="chain" id="PRO_0000287243" description="Heterogeneous nuclear ribonucleoprotein D-like-A">
    <location>
        <begin position="1"/>
        <end position="293"/>
    </location>
</feature>
<feature type="domain" description="RRM 1" evidence="3">
    <location>
        <begin position="26"/>
        <end position="108"/>
    </location>
</feature>
<feature type="domain" description="RRM 2" evidence="3">
    <location>
        <begin position="111"/>
        <end position="188"/>
    </location>
</feature>
<feature type="region of interest" description="Disordered" evidence="4">
    <location>
        <begin position="1"/>
        <end position="21"/>
    </location>
</feature>
<feature type="region of interest" description="Disordered" evidence="4">
    <location>
        <begin position="193"/>
        <end position="224"/>
    </location>
</feature>
<feature type="region of interest" description="Disordered" evidence="4">
    <location>
        <begin position="274"/>
        <end position="293"/>
    </location>
</feature>
<feature type="compositionally biased region" description="Gly residues" evidence="4">
    <location>
        <begin position="202"/>
        <end position="222"/>
    </location>
</feature>
<gene>
    <name type="primary">hnrnpdl-a</name>
    <name type="synonym">hnrpdl-a</name>
</gene>
<protein>
    <recommendedName>
        <fullName>Heterogeneous nuclear ribonucleoprotein D-like-A</fullName>
        <shortName>hnRNP D-like A</shortName>
        <shortName>hnRNP DL-A</shortName>
    </recommendedName>
</protein>
<proteinExistence type="evidence at transcript level"/>